<dbReference type="EMBL" id="AL445565">
    <property type="protein sequence ID" value="CAC13748.1"/>
    <property type="molecule type" value="Genomic_DNA"/>
</dbReference>
<dbReference type="PIR" id="G90583">
    <property type="entry name" value="G90583"/>
</dbReference>
<dbReference type="RefSeq" id="WP_010925376.1">
    <property type="nucleotide sequence ID" value="NC_002771.1"/>
</dbReference>
<dbReference type="SMR" id="Q98PZ4"/>
<dbReference type="STRING" id="272635.gene:17577182"/>
<dbReference type="KEGG" id="mpu:MYPU_5750"/>
<dbReference type="eggNOG" id="COG0094">
    <property type="taxonomic scope" value="Bacteria"/>
</dbReference>
<dbReference type="HOGENOM" id="CLU_061015_2_1_14"/>
<dbReference type="BioCyc" id="MPUL272635:G1GT6-588-MONOMER"/>
<dbReference type="Proteomes" id="UP000000528">
    <property type="component" value="Chromosome"/>
</dbReference>
<dbReference type="GO" id="GO:1990904">
    <property type="term" value="C:ribonucleoprotein complex"/>
    <property type="evidence" value="ECO:0007669"/>
    <property type="project" value="UniProtKB-KW"/>
</dbReference>
<dbReference type="GO" id="GO:0005840">
    <property type="term" value="C:ribosome"/>
    <property type="evidence" value="ECO:0007669"/>
    <property type="project" value="UniProtKB-KW"/>
</dbReference>
<dbReference type="GO" id="GO:0019843">
    <property type="term" value="F:rRNA binding"/>
    <property type="evidence" value="ECO:0007669"/>
    <property type="project" value="UniProtKB-UniRule"/>
</dbReference>
<dbReference type="GO" id="GO:0003735">
    <property type="term" value="F:structural constituent of ribosome"/>
    <property type="evidence" value="ECO:0007669"/>
    <property type="project" value="InterPro"/>
</dbReference>
<dbReference type="GO" id="GO:0000049">
    <property type="term" value="F:tRNA binding"/>
    <property type="evidence" value="ECO:0007669"/>
    <property type="project" value="UniProtKB-UniRule"/>
</dbReference>
<dbReference type="GO" id="GO:0006412">
    <property type="term" value="P:translation"/>
    <property type="evidence" value="ECO:0007669"/>
    <property type="project" value="UniProtKB-UniRule"/>
</dbReference>
<dbReference type="FunFam" id="3.30.1440.10:FF:000001">
    <property type="entry name" value="50S ribosomal protein L5"/>
    <property type="match status" value="1"/>
</dbReference>
<dbReference type="Gene3D" id="3.30.1440.10">
    <property type="match status" value="1"/>
</dbReference>
<dbReference type="HAMAP" id="MF_01333_B">
    <property type="entry name" value="Ribosomal_uL5_B"/>
    <property type="match status" value="1"/>
</dbReference>
<dbReference type="InterPro" id="IPR002132">
    <property type="entry name" value="Ribosomal_uL5"/>
</dbReference>
<dbReference type="InterPro" id="IPR020930">
    <property type="entry name" value="Ribosomal_uL5_bac-type"/>
</dbReference>
<dbReference type="InterPro" id="IPR031309">
    <property type="entry name" value="Ribosomal_uL5_C"/>
</dbReference>
<dbReference type="InterPro" id="IPR022803">
    <property type="entry name" value="Ribosomal_uL5_dom_sf"/>
</dbReference>
<dbReference type="InterPro" id="IPR031310">
    <property type="entry name" value="Ribosomal_uL5_N"/>
</dbReference>
<dbReference type="NCBIfam" id="NF000585">
    <property type="entry name" value="PRK00010.1"/>
    <property type="match status" value="1"/>
</dbReference>
<dbReference type="PANTHER" id="PTHR11994">
    <property type="entry name" value="60S RIBOSOMAL PROTEIN L11-RELATED"/>
    <property type="match status" value="1"/>
</dbReference>
<dbReference type="Pfam" id="PF00281">
    <property type="entry name" value="Ribosomal_L5"/>
    <property type="match status" value="1"/>
</dbReference>
<dbReference type="Pfam" id="PF00673">
    <property type="entry name" value="Ribosomal_L5_C"/>
    <property type="match status" value="1"/>
</dbReference>
<dbReference type="PIRSF" id="PIRSF002161">
    <property type="entry name" value="Ribosomal_L5"/>
    <property type="match status" value="1"/>
</dbReference>
<dbReference type="SUPFAM" id="SSF55282">
    <property type="entry name" value="RL5-like"/>
    <property type="match status" value="1"/>
</dbReference>
<proteinExistence type="inferred from homology"/>
<gene>
    <name evidence="1" type="primary">rplE</name>
    <name type="ordered locus">MYPU_5750</name>
</gene>
<name>RL5_MYCPU</name>
<evidence type="ECO:0000255" key="1">
    <source>
        <dbReference type="HAMAP-Rule" id="MF_01333"/>
    </source>
</evidence>
<evidence type="ECO:0000305" key="2"/>
<feature type="chain" id="PRO_0000124955" description="Large ribosomal subunit protein uL5">
    <location>
        <begin position="1"/>
        <end position="181"/>
    </location>
</feature>
<organism>
    <name type="scientific">Mycoplasmopsis pulmonis (strain UAB CTIP)</name>
    <name type="common">Mycoplasma pulmonis</name>
    <dbReference type="NCBI Taxonomy" id="272635"/>
    <lineage>
        <taxon>Bacteria</taxon>
        <taxon>Bacillati</taxon>
        <taxon>Mycoplasmatota</taxon>
        <taxon>Mycoplasmoidales</taxon>
        <taxon>Metamycoplasmataceae</taxon>
        <taxon>Mycoplasmopsis</taxon>
    </lineage>
</organism>
<accession>Q98PZ4</accession>
<keyword id="KW-1185">Reference proteome</keyword>
<keyword id="KW-0687">Ribonucleoprotein</keyword>
<keyword id="KW-0689">Ribosomal protein</keyword>
<keyword id="KW-0694">RNA-binding</keyword>
<keyword id="KW-0699">rRNA-binding</keyword>
<keyword id="KW-0820">tRNA-binding</keyword>
<sequence>MILKEKYLKEVKSNLQKQFNYSSSMEIPRIEKVILNMTAGKEVTNAKAIEEVINELTLISGQKPYQTVAKKSLASWKLREGMPMGGKVTLRSKNMWIFLNKLINIAMPRIRDFRGVSPKAFDGRGNYSLGIKEQIIFPEIEFDKIRKIKGLDVIIVTSAKTNKEARALLEGIGIPFAKVEK</sequence>
<reference key="1">
    <citation type="journal article" date="2001" name="Nucleic Acids Res.">
        <title>The complete genome sequence of the murine respiratory pathogen Mycoplasma pulmonis.</title>
        <authorList>
            <person name="Chambaud I."/>
            <person name="Heilig R."/>
            <person name="Ferris S."/>
            <person name="Barbe V."/>
            <person name="Samson D."/>
            <person name="Galisson F."/>
            <person name="Moszer I."/>
            <person name="Dybvig K."/>
            <person name="Wroblewski H."/>
            <person name="Viari A."/>
            <person name="Rocha E.P.C."/>
            <person name="Blanchard A."/>
        </authorList>
    </citation>
    <scope>NUCLEOTIDE SEQUENCE [LARGE SCALE GENOMIC DNA]</scope>
    <source>
        <strain>UAB CTIP</strain>
    </source>
</reference>
<protein>
    <recommendedName>
        <fullName evidence="1">Large ribosomal subunit protein uL5</fullName>
    </recommendedName>
    <alternativeName>
        <fullName evidence="2">50S ribosomal protein L5</fullName>
    </alternativeName>
</protein>
<comment type="function">
    <text evidence="1">This is one of the proteins that bind and probably mediate the attachment of the 5S RNA into the large ribosomal subunit, where it forms part of the central protuberance. In the 70S ribosome it contacts protein S13 of the 30S subunit (bridge B1b), connecting the 2 subunits; this bridge is implicated in subunit movement. Contacts the P site tRNA; the 5S rRNA and some of its associated proteins might help stabilize positioning of ribosome-bound tRNAs.</text>
</comment>
<comment type="subunit">
    <text evidence="1">Part of the 50S ribosomal subunit; part of the 5S rRNA/L5/L18/L25 subcomplex. Contacts the 5S rRNA and the P site tRNA. Forms a bridge to the 30S subunit in the 70S ribosome.</text>
</comment>
<comment type="similarity">
    <text evidence="1">Belongs to the universal ribosomal protein uL5 family.</text>
</comment>